<proteinExistence type="evidence at protein level"/>
<feature type="signal peptide" evidence="2">
    <location>
        <begin position="1"/>
        <end position="30"/>
    </location>
</feature>
<feature type="chain" id="PRO_0000422137" description="Serine/threonine-protein kinase/endoribonuclease IRE1a">
    <location>
        <begin position="31"/>
        <end position="841"/>
    </location>
</feature>
<feature type="topological domain" description="Lumenal" evidence="2">
    <location>
        <begin position="31"/>
        <end position="323"/>
    </location>
</feature>
<feature type="transmembrane region" description="Helical" evidence="2">
    <location>
        <begin position="324"/>
        <end position="344"/>
    </location>
</feature>
<feature type="topological domain" description="Cytoplasmic" evidence="2">
    <location>
        <begin position="345"/>
        <end position="841"/>
    </location>
</feature>
<feature type="domain" description="Protein kinase" evidence="3">
    <location>
        <begin position="414"/>
        <end position="704"/>
    </location>
</feature>
<feature type="domain" description="KEN" evidence="4">
    <location>
        <begin position="707"/>
        <end position="838"/>
    </location>
</feature>
<feature type="region of interest" description="Disordered" evidence="6">
    <location>
        <begin position="352"/>
        <end position="382"/>
    </location>
</feature>
<feature type="active site" description="Proton acceptor" evidence="3 5">
    <location>
        <position position="570"/>
    </location>
</feature>
<feature type="binding site" evidence="3">
    <location>
        <begin position="420"/>
        <end position="428"/>
    </location>
    <ligand>
        <name>ATP</name>
        <dbReference type="ChEBI" id="CHEBI:30616"/>
    </ligand>
</feature>
<feature type="binding site" evidence="3">
    <location>
        <position position="442"/>
    </location>
    <ligand>
        <name>ATP</name>
        <dbReference type="ChEBI" id="CHEBI:30616"/>
    </ligand>
</feature>
<feature type="glycosylation site" description="N-linked (GlcNAc...) asparagine" evidence="2">
    <location>
        <position position="100"/>
    </location>
</feature>
<feature type="glycosylation site" description="N-linked (GlcNAc...) asparagine" evidence="2">
    <location>
        <position position="104"/>
    </location>
</feature>
<feature type="glycosylation site" description="N-linked (GlcNAc...) asparagine" evidence="2">
    <location>
        <position position="119"/>
    </location>
</feature>
<feature type="glycosylation site" description="N-linked (GlcNAc...) asparagine" evidence="2">
    <location>
        <position position="132"/>
    </location>
</feature>
<feature type="glycosylation site" description="N-linked (GlcNAc...) asparagine" evidence="2">
    <location>
        <position position="221"/>
    </location>
</feature>
<feature type="mutagenesis site" description="Loss of autophosphorylation activity." evidence="7 8">
    <original>K</original>
    <variation>A</variation>
    <location>
        <position position="442"/>
    </location>
</feature>
<feature type="sequence conflict" description="In Ref. 5; BAF00868." evidence="13" ref="5">
    <original>P</original>
    <variation>T</variation>
    <location>
        <position position="39"/>
    </location>
</feature>
<feature type="sequence conflict" description="In Ref. 5; BAF00868." evidence="13" ref="5">
    <original>N</original>
    <variation>S</variation>
    <location>
        <position position="780"/>
    </location>
</feature>
<feature type="sequence conflict" description="In Ref. 5; BAD94631." evidence="13" ref="5">
    <original>N</original>
    <variation>D</variation>
    <location>
        <position position="783"/>
    </location>
</feature>
<keyword id="KW-0067">ATP-binding</keyword>
<keyword id="KW-1015">Disulfide bond</keyword>
<keyword id="KW-0256">Endoplasmic reticulum</keyword>
<keyword id="KW-0325">Glycoprotein</keyword>
<keyword id="KW-0378">Hydrolase</keyword>
<keyword id="KW-0391">Immunity</keyword>
<keyword id="KW-0418">Kinase</keyword>
<keyword id="KW-0460">Magnesium</keyword>
<keyword id="KW-0472">Membrane</keyword>
<keyword id="KW-0479">Metal-binding</keyword>
<keyword id="KW-0507">mRNA processing</keyword>
<keyword id="KW-0508">mRNA splicing</keyword>
<keyword id="KW-0511">Multifunctional enzyme</keyword>
<keyword id="KW-0547">Nucleotide-binding</keyword>
<keyword id="KW-1185">Reference proteome</keyword>
<keyword id="KW-0723">Serine/threonine-protein kinase</keyword>
<keyword id="KW-0732">Signal</keyword>
<keyword id="KW-0804">Transcription</keyword>
<keyword id="KW-0805">Transcription regulation</keyword>
<keyword id="KW-0808">Transferase</keyword>
<keyword id="KW-0812">Transmembrane</keyword>
<keyword id="KW-1133">Transmembrane helix</keyword>
<keyword id="KW-0834">Unfolded protein response</keyword>
<accession>Q9C5S2</accession>
<accession>Q0WPT1</accession>
<accession>Q56WN0</accession>
<accession>Q9SHL6</accession>
<dbReference type="EC" id="2.7.11.1"/>
<dbReference type="EC" id="3.1.26.-"/>
<dbReference type="EMBL" id="AB049937">
    <property type="protein sequence ID" value="BAB63367.1"/>
    <property type="molecule type" value="mRNA"/>
</dbReference>
<dbReference type="EMBL" id="AF308596">
    <property type="protein sequence ID" value="AAK15470.1"/>
    <property type="molecule type" value="mRNA"/>
</dbReference>
<dbReference type="EMBL" id="AC007584">
    <property type="protein sequence ID" value="AAD32909.2"/>
    <property type="molecule type" value="Genomic_DNA"/>
</dbReference>
<dbReference type="EMBL" id="CP002685">
    <property type="protein sequence ID" value="AEC06640.1"/>
    <property type="molecule type" value="Genomic_DNA"/>
</dbReference>
<dbReference type="EMBL" id="AK222006">
    <property type="protein sequence ID" value="BAD94631.1"/>
    <property type="molecule type" value="mRNA"/>
</dbReference>
<dbReference type="EMBL" id="AK228980">
    <property type="protein sequence ID" value="BAF00868.1"/>
    <property type="molecule type" value="mRNA"/>
</dbReference>
<dbReference type="PIR" id="B84553">
    <property type="entry name" value="B84553"/>
</dbReference>
<dbReference type="RefSeq" id="NP_565419.1">
    <property type="nucleotide sequence ID" value="NM_127306.4"/>
</dbReference>
<dbReference type="SMR" id="Q9C5S2"/>
<dbReference type="BioGRID" id="1615">
    <property type="interactions" value="3"/>
</dbReference>
<dbReference type="FunCoup" id="Q9C5S2">
    <property type="interactions" value="1350"/>
</dbReference>
<dbReference type="IntAct" id="Q9C5S2">
    <property type="interactions" value="2"/>
</dbReference>
<dbReference type="STRING" id="3702.Q9C5S2"/>
<dbReference type="GlyCosmos" id="Q9C5S2">
    <property type="glycosylation" value="5 sites, No reported glycans"/>
</dbReference>
<dbReference type="GlyGen" id="Q9C5S2">
    <property type="glycosylation" value="5 sites"/>
</dbReference>
<dbReference type="PaxDb" id="3702-AT2G17520.1"/>
<dbReference type="ProteomicsDB" id="232281"/>
<dbReference type="EnsemblPlants" id="AT2G17520.1">
    <property type="protein sequence ID" value="AT2G17520.1"/>
    <property type="gene ID" value="AT2G17520"/>
</dbReference>
<dbReference type="GeneID" id="816258"/>
<dbReference type="Gramene" id="AT2G17520.1">
    <property type="protein sequence ID" value="AT2G17520.1"/>
    <property type="gene ID" value="AT2G17520"/>
</dbReference>
<dbReference type="KEGG" id="ath:AT2G17520"/>
<dbReference type="Araport" id="AT2G17520"/>
<dbReference type="TAIR" id="AT2G17520">
    <property type="gene designation" value="IRE1A"/>
</dbReference>
<dbReference type="eggNOG" id="KOG1027">
    <property type="taxonomic scope" value="Eukaryota"/>
</dbReference>
<dbReference type="HOGENOM" id="CLU_004875_3_1_1"/>
<dbReference type="InParanoid" id="Q9C5S2"/>
<dbReference type="OMA" id="ITGCKHP"/>
<dbReference type="PhylomeDB" id="Q9C5S2"/>
<dbReference type="PRO" id="PR:Q9C5S2"/>
<dbReference type="Proteomes" id="UP000006548">
    <property type="component" value="Chromosome 2"/>
</dbReference>
<dbReference type="ExpressionAtlas" id="Q9C5S2">
    <property type="expression patterns" value="baseline and differential"/>
</dbReference>
<dbReference type="GO" id="GO:0005783">
    <property type="term" value="C:endoplasmic reticulum"/>
    <property type="evidence" value="ECO:0000314"/>
    <property type="project" value="UniProtKB"/>
</dbReference>
<dbReference type="GO" id="GO:0042406">
    <property type="term" value="C:extrinsic component of endoplasmic reticulum membrane"/>
    <property type="evidence" value="ECO:0000314"/>
    <property type="project" value="TAIR"/>
</dbReference>
<dbReference type="GO" id="GO:0099503">
    <property type="term" value="C:secretory vesicle"/>
    <property type="evidence" value="ECO:0007005"/>
    <property type="project" value="TAIR"/>
</dbReference>
<dbReference type="GO" id="GO:0005524">
    <property type="term" value="F:ATP binding"/>
    <property type="evidence" value="ECO:0007669"/>
    <property type="project" value="UniProtKB-KW"/>
</dbReference>
<dbReference type="GO" id="GO:0046872">
    <property type="term" value="F:metal ion binding"/>
    <property type="evidence" value="ECO:0007669"/>
    <property type="project" value="UniProtKB-KW"/>
</dbReference>
<dbReference type="GO" id="GO:0106310">
    <property type="term" value="F:protein serine kinase activity"/>
    <property type="evidence" value="ECO:0007669"/>
    <property type="project" value="RHEA"/>
</dbReference>
<dbReference type="GO" id="GO:0004674">
    <property type="term" value="F:protein serine/threonine kinase activity"/>
    <property type="evidence" value="ECO:0007669"/>
    <property type="project" value="UniProtKB-KW"/>
</dbReference>
<dbReference type="GO" id="GO:0004521">
    <property type="term" value="F:RNA endonuclease activity"/>
    <property type="evidence" value="ECO:0000315"/>
    <property type="project" value="TAIR"/>
</dbReference>
<dbReference type="GO" id="GO:0042742">
    <property type="term" value="P:defense response to bacterium"/>
    <property type="evidence" value="ECO:0000315"/>
    <property type="project" value="UniProtKB"/>
</dbReference>
<dbReference type="GO" id="GO:0030968">
    <property type="term" value="P:endoplasmic reticulum unfolded protein response"/>
    <property type="evidence" value="ECO:0000316"/>
    <property type="project" value="TAIR"/>
</dbReference>
<dbReference type="GO" id="GO:0002376">
    <property type="term" value="P:immune system process"/>
    <property type="evidence" value="ECO:0007669"/>
    <property type="project" value="UniProtKB-KW"/>
</dbReference>
<dbReference type="GO" id="GO:0006397">
    <property type="term" value="P:mRNA processing"/>
    <property type="evidence" value="ECO:0007669"/>
    <property type="project" value="UniProtKB-KW"/>
</dbReference>
<dbReference type="GO" id="GO:0046777">
    <property type="term" value="P:protein autophosphorylation"/>
    <property type="evidence" value="ECO:0000315"/>
    <property type="project" value="UniProtKB"/>
</dbReference>
<dbReference type="GO" id="GO:0034976">
    <property type="term" value="P:response to endoplasmic reticulum stress"/>
    <property type="evidence" value="ECO:0000270"/>
    <property type="project" value="TAIR"/>
</dbReference>
<dbReference type="GO" id="GO:0009751">
    <property type="term" value="P:response to salicylic acid"/>
    <property type="evidence" value="ECO:0000315"/>
    <property type="project" value="UniProtKB"/>
</dbReference>
<dbReference type="GO" id="GO:0008380">
    <property type="term" value="P:RNA splicing"/>
    <property type="evidence" value="ECO:0000315"/>
    <property type="project" value="UniProtKB"/>
</dbReference>
<dbReference type="CDD" id="cd10422">
    <property type="entry name" value="RNase_Ire1"/>
    <property type="match status" value="1"/>
</dbReference>
<dbReference type="CDD" id="cd13982">
    <property type="entry name" value="STKc_IRE1"/>
    <property type="match status" value="1"/>
</dbReference>
<dbReference type="FunFam" id="3.30.200.20:FF:000077">
    <property type="entry name" value="Putative Serine/threonine-protein kinase/endoribonuclease IRE1"/>
    <property type="match status" value="1"/>
</dbReference>
<dbReference type="FunFam" id="1.20.1440.180:FF:000002">
    <property type="entry name" value="Serine/threonine-protein kinase/endoribonuclease IRE1"/>
    <property type="match status" value="1"/>
</dbReference>
<dbReference type="FunFam" id="1.10.510.10:FF:000463">
    <property type="entry name" value="Serine/threonine-protein kinase/endoribonuclease IRE1a"/>
    <property type="match status" value="1"/>
</dbReference>
<dbReference type="Gene3D" id="1.20.1440.180">
    <property type="entry name" value="KEN domain"/>
    <property type="match status" value="1"/>
</dbReference>
<dbReference type="Gene3D" id="3.30.200.20">
    <property type="entry name" value="Phosphorylase Kinase, domain 1"/>
    <property type="match status" value="1"/>
</dbReference>
<dbReference type="Gene3D" id="1.10.510.10">
    <property type="entry name" value="Transferase(Phosphotransferase) domain 1"/>
    <property type="match status" value="1"/>
</dbReference>
<dbReference type="InterPro" id="IPR045133">
    <property type="entry name" value="IRE1/2-like"/>
</dbReference>
<dbReference type="InterPro" id="IPR010513">
    <property type="entry name" value="KEN_dom"/>
</dbReference>
<dbReference type="InterPro" id="IPR038357">
    <property type="entry name" value="KEN_sf"/>
</dbReference>
<dbReference type="InterPro" id="IPR011009">
    <property type="entry name" value="Kinase-like_dom_sf"/>
</dbReference>
<dbReference type="InterPro" id="IPR000719">
    <property type="entry name" value="Prot_kinase_dom"/>
</dbReference>
<dbReference type="InterPro" id="IPR008271">
    <property type="entry name" value="Ser/Thr_kinase_AS"/>
</dbReference>
<dbReference type="PANTHER" id="PTHR13954">
    <property type="entry name" value="IRE1-RELATED"/>
    <property type="match status" value="1"/>
</dbReference>
<dbReference type="PANTHER" id="PTHR13954:SF6">
    <property type="entry name" value="NON-SPECIFIC SERINE_THREONINE PROTEIN KINASE"/>
    <property type="match status" value="1"/>
</dbReference>
<dbReference type="Pfam" id="PF00069">
    <property type="entry name" value="Pkinase"/>
    <property type="match status" value="1"/>
</dbReference>
<dbReference type="Pfam" id="PF06479">
    <property type="entry name" value="Ribonuc_2-5A"/>
    <property type="match status" value="1"/>
</dbReference>
<dbReference type="SMART" id="SM00580">
    <property type="entry name" value="PUG"/>
    <property type="match status" value="1"/>
</dbReference>
<dbReference type="SMART" id="SM00220">
    <property type="entry name" value="S_TKc"/>
    <property type="match status" value="1"/>
</dbReference>
<dbReference type="SUPFAM" id="SSF56112">
    <property type="entry name" value="Protein kinase-like (PK-like)"/>
    <property type="match status" value="1"/>
</dbReference>
<dbReference type="PROSITE" id="PS51392">
    <property type="entry name" value="KEN"/>
    <property type="match status" value="1"/>
</dbReference>
<dbReference type="PROSITE" id="PS50011">
    <property type="entry name" value="PROTEIN_KINASE_DOM"/>
    <property type="match status" value="1"/>
</dbReference>
<dbReference type="PROSITE" id="PS00108">
    <property type="entry name" value="PROTEIN_KINASE_ST"/>
    <property type="match status" value="1"/>
</dbReference>
<protein>
    <recommendedName>
        <fullName>Serine/threonine-protein kinase/endoribonuclease IRE1a</fullName>
    </recommendedName>
    <alternativeName>
        <fullName>Endoplasmic reticulum-to-nucleus signaling 1-2</fullName>
    </alternativeName>
    <alternativeName>
        <fullName>Inositol-requiring protein 1-2</fullName>
        <shortName>AtIRE1-2</shortName>
    </alternativeName>
    <alternativeName>
        <fullName>Serine/threonine-protein kinase/endoribonuclease IRE1-2</fullName>
    </alternativeName>
    <domain>
        <recommendedName>
            <fullName>Serine/threonine-protein kinase</fullName>
            <ecNumber>2.7.11.1</ecNumber>
        </recommendedName>
    </domain>
    <domain>
        <recommendedName>
            <fullName>Endoribonuclease</fullName>
            <ecNumber>3.1.26.-</ecNumber>
        </recommendedName>
    </domain>
</protein>
<comment type="function">
    <text evidence="7 8 10 11 12">Senses unfolded proteins in the lumen of the endoplasmic reticulum via its N-terminal domain which leads to enzyme auto-activation. The active endoribonuclease domain splices bZIP60 mRNA to generate a new C-terminus, converting it into a potent unfolded-protein response transcriptional activator which then induces transcription of UPR target genes. Involved in organ growth regulation. Plays a role in plant immunity and abiotic stress responses.</text>
</comment>
<comment type="catalytic activity">
    <reaction>
        <text>L-seryl-[protein] + ATP = O-phospho-L-seryl-[protein] + ADP + H(+)</text>
        <dbReference type="Rhea" id="RHEA:17989"/>
        <dbReference type="Rhea" id="RHEA-COMP:9863"/>
        <dbReference type="Rhea" id="RHEA-COMP:11604"/>
        <dbReference type="ChEBI" id="CHEBI:15378"/>
        <dbReference type="ChEBI" id="CHEBI:29999"/>
        <dbReference type="ChEBI" id="CHEBI:30616"/>
        <dbReference type="ChEBI" id="CHEBI:83421"/>
        <dbReference type="ChEBI" id="CHEBI:456216"/>
        <dbReference type="EC" id="2.7.11.1"/>
    </reaction>
</comment>
<comment type="catalytic activity">
    <reaction>
        <text>L-threonyl-[protein] + ATP = O-phospho-L-threonyl-[protein] + ADP + H(+)</text>
        <dbReference type="Rhea" id="RHEA:46608"/>
        <dbReference type="Rhea" id="RHEA-COMP:11060"/>
        <dbReference type="Rhea" id="RHEA-COMP:11605"/>
        <dbReference type="ChEBI" id="CHEBI:15378"/>
        <dbReference type="ChEBI" id="CHEBI:30013"/>
        <dbReference type="ChEBI" id="CHEBI:30616"/>
        <dbReference type="ChEBI" id="CHEBI:61977"/>
        <dbReference type="ChEBI" id="CHEBI:456216"/>
        <dbReference type="EC" id="2.7.11.1"/>
    </reaction>
</comment>
<comment type="cofactor">
    <cofactor evidence="1">
        <name>Mg(2+)</name>
        <dbReference type="ChEBI" id="CHEBI:18420"/>
    </cofactor>
</comment>
<comment type="activity regulation">
    <text>The kinase domain is activated by trans-autophosphorylation. Kinase activity is required for activation of the endoribonuclease domain.</text>
</comment>
<comment type="subunit">
    <text evidence="1">Homodimer; disulfide-linked. Dimer formation is driven by hydrophobic interactions within the N-terminal luminal domains and stabilized by disulfide bridges (By similarity).</text>
</comment>
<comment type="subcellular location">
    <subcellularLocation>
        <location evidence="7">Endoplasmic reticulum membrane</location>
        <topology evidence="7">Single-pass type I membrane protein</topology>
    </subcellularLocation>
</comment>
<comment type="tissue specificity">
    <text evidence="7 8">Ubiquitous. Detected in the vascular bundles of young plants, leaves, roots, seedlings and in the receptacles of flowers and vascular bundles of the petals.</text>
</comment>
<comment type="induction">
    <text>By ER stress inducer tunicamycin, by salicylic acid (SA) and by bacterial pathogen infection.</text>
</comment>
<comment type="PTM">
    <text>Autophosphorylated.</text>
</comment>
<comment type="disruption phenotype">
    <text evidence="9 10 11 12">No visible phenotype but shows enhanced susceptibility to a bacterial pathogen and deficiency in establishing systemic acquired resistance (SAR). Ire1a and ire1b double mutant is more sensitive to the ER stress inducer tunicamycin than the wild-type and is enable to give rise to the spliced bZIP60 mRNA form (PubMed:22355548). Ire1a and ire1b double mutant displays short roots and a ER stress-sensitive phenotype (PubMed:21914012).</text>
</comment>
<comment type="similarity">
    <text evidence="3">Belongs to the protein kinase superfamily. Ser/Thr protein kinase family.</text>
</comment>
<organism>
    <name type="scientific">Arabidopsis thaliana</name>
    <name type="common">Mouse-ear cress</name>
    <dbReference type="NCBI Taxonomy" id="3702"/>
    <lineage>
        <taxon>Eukaryota</taxon>
        <taxon>Viridiplantae</taxon>
        <taxon>Streptophyta</taxon>
        <taxon>Embryophyta</taxon>
        <taxon>Tracheophyta</taxon>
        <taxon>Spermatophyta</taxon>
        <taxon>Magnoliopsida</taxon>
        <taxon>eudicotyledons</taxon>
        <taxon>Gunneridae</taxon>
        <taxon>Pentapetalae</taxon>
        <taxon>rosids</taxon>
        <taxon>malvids</taxon>
        <taxon>Brassicales</taxon>
        <taxon>Brassicaceae</taxon>
        <taxon>Camelineae</taxon>
        <taxon>Arabidopsis</taxon>
    </lineage>
</organism>
<name>IRE1A_ARATH</name>
<sequence>MPPRCPFLRHLFFLLLLLSPWIMSPCGGAADDVTYPIVPSSPGRRSILQIRREPPTEPNTKLVVDRDGKVFLKQQPKETPYWSFSTGSPMHSLYQAPANNNTENATEITRPHIIVEYLNNSKAATTVDGYHNWTVQEFFRQKPLVTDDGVTLGSETTSAYLVDGRSGRLIHVYKSTGDTKITNALVKPASTEDFVNEPLLIRRTDSKLEHFSKTTGKLVWNLTVSHFRAALLCDPVFNSGYDLGPKLQTGIYMPLLCGSQIDVRGPEIVIRVLHDQPMNVKMLPSPSLNHFESENSIMPFGKARESRKLQEQHKQKYTYLFGQWSPVKLLAPLVLLGVVVSVFIKKFSSRGSDVSLKAGPSKKKKNRKSAKDTNRQSVPRGQDQFELIEGGQMLLGFNNFQSGATDGRKIGKLFLSSKEIAKGSNGTVVFEGIYEGRPVAVKRLVRSHHEVAFKEIQNLIASDQHTNIIRWYGVEYDQDFVYLSLERCTCSLDDLIKSYLEFSMTKVLENNDSTEGVAAYKIQLDSLEGVIKGNNFWKVGGHPSPLMLKLMRDIVCGIVHLHELGIVHRDLKPQNVLISKDMTLSAKLSDMGISKRMSRDMSSLGHLATGSGSSGWQAPEQLLQGRQTRAVDMFSLGCVIFYTITGCKHPFGDDLERDVNIVKNKVDLFLVEHVPEASDLISRLLNPDPDLRPSATEVLLHPMFWNSEMRLSFLRDASDRVELENREADSEILKAMESTAPVAIGGKWDEKLEPVFITNIGRYRRYKYDSIRDLLRVIRNKLNHHRELPPEIQELVGTVPEGFDEYFAVRFPKLLIEVYRVISLHCREEEVFRKYFKCDII</sequence>
<reference key="1">
    <citation type="journal article" date="2001" name="Plant Physiol.">
        <title>Molecular characterization of two Arabidopsis Ire1 homologs, endoplasmic reticulum-located transmembrane protein kinases.</title>
        <authorList>
            <person name="Koizumi N."/>
            <person name="Martinez I.M."/>
            <person name="Kimata Y."/>
            <person name="Kohno K."/>
            <person name="Sano H."/>
            <person name="Chrispeels M.J."/>
        </authorList>
    </citation>
    <scope>NUCLEOTIDE SEQUENCE [MRNA]</scope>
    <scope>FUNCTION</scope>
    <scope>AUTOPHOSPHORYLATION</scope>
    <scope>MUTAGENESIS OF LYS-442</scope>
    <scope>SUBCELLULAR LOCATION</scope>
    <scope>TISSUE SPECIFICITY</scope>
</reference>
<reference key="2">
    <citation type="journal article" date="2002" name="Biochim. Biophys. Acta">
        <title>Characterization of two homologs of Ire1p, a kinase/endoribonuclease in yeast, in Arabidopsis thaliana.</title>
        <authorList>
            <person name="Noh S.J."/>
            <person name="Kwon C.S."/>
            <person name="Chung W.I."/>
        </authorList>
    </citation>
    <scope>NUCLEOTIDE SEQUENCE [MRNA]</scope>
    <scope>FUNCTION</scope>
    <scope>AUTOPHOSPHORYLATION</scope>
    <scope>MUTAGENESIS OF LYS-442</scope>
    <scope>TISSUE SPECIFICITY</scope>
    <source>
        <strain>cv. Columbia</strain>
    </source>
</reference>
<reference key="3">
    <citation type="journal article" date="1999" name="Nature">
        <title>Sequence and analysis of chromosome 2 of the plant Arabidopsis thaliana.</title>
        <authorList>
            <person name="Lin X."/>
            <person name="Kaul S."/>
            <person name="Rounsley S.D."/>
            <person name="Shea T.P."/>
            <person name="Benito M.-I."/>
            <person name="Town C.D."/>
            <person name="Fujii C.Y."/>
            <person name="Mason T.M."/>
            <person name="Bowman C.L."/>
            <person name="Barnstead M.E."/>
            <person name="Feldblyum T.V."/>
            <person name="Buell C.R."/>
            <person name="Ketchum K.A."/>
            <person name="Lee J.J."/>
            <person name="Ronning C.M."/>
            <person name="Koo H.L."/>
            <person name="Moffat K.S."/>
            <person name="Cronin L.A."/>
            <person name="Shen M."/>
            <person name="Pai G."/>
            <person name="Van Aken S."/>
            <person name="Umayam L."/>
            <person name="Tallon L.J."/>
            <person name="Gill J.E."/>
            <person name="Adams M.D."/>
            <person name="Carrera A.J."/>
            <person name="Creasy T.H."/>
            <person name="Goodman H.M."/>
            <person name="Somerville C.R."/>
            <person name="Copenhaver G.P."/>
            <person name="Preuss D."/>
            <person name="Nierman W.C."/>
            <person name="White O."/>
            <person name="Eisen J.A."/>
            <person name="Salzberg S.L."/>
            <person name="Fraser C.M."/>
            <person name="Venter J.C."/>
        </authorList>
    </citation>
    <scope>NUCLEOTIDE SEQUENCE [LARGE SCALE GENOMIC DNA]</scope>
    <source>
        <strain>cv. Columbia</strain>
    </source>
</reference>
<reference key="4">
    <citation type="journal article" date="2017" name="Plant J.">
        <title>Araport11: a complete reannotation of the Arabidopsis thaliana reference genome.</title>
        <authorList>
            <person name="Cheng C.Y."/>
            <person name="Krishnakumar V."/>
            <person name="Chan A.P."/>
            <person name="Thibaud-Nissen F."/>
            <person name="Schobel S."/>
            <person name="Town C.D."/>
        </authorList>
    </citation>
    <scope>GENOME REANNOTATION</scope>
    <source>
        <strain>cv. Columbia</strain>
    </source>
</reference>
<reference key="5">
    <citation type="submission" date="2006-07" db="EMBL/GenBank/DDBJ databases">
        <title>Large-scale analysis of RIKEN Arabidopsis full-length (RAFL) cDNAs.</title>
        <authorList>
            <person name="Totoki Y."/>
            <person name="Seki M."/>
            <person name="Ishida J."/>
            <person name="Nakajima M."/>
            <person name="Enju A."/>
            <person name="Kamiya A."/>
            <person name="Narusaka M."/>
            <person name="Shin-i T."/>
            <person name="Nakagawa M."/>
            <person name="Sakamoto N."/>
            <person name="Oishi K."/>
            <person name="Kohara Y."/>
            <person name="Kobayashi M."/>
            <person name="Toyoda A."/>
            <person name="Sakaki Y."/>
            <person name="Sakurai T."/>
            <person name="Iida K."/>
            <person name="Akiyama K."/>
            <person name="Satou M."/>
            <person name="Toyoda T."/>
            <person name="Konagaya A."/>
            <person name="Carninci P."/>
            <person name="Kawai J."/>
            <person name="Hayashizaki Y."/>
            <person name="Shinozaki K."/>
        </authorList>
    </citation>
    <scope>NUCLEOTIDE SEQUENCE [LARGE SCALE MRNA]</scope>
    <source>
        <strain>cv. Columbia</strain>
    </source>
</reference>
<reference key="6">
    <citation type="journal article" date="2003" name="Plant Physiol.">
        <title>Expansion of the receptor-like kinase/Pelle gene family and receptor-like proteins in Arabidopsis.</title>
        <authorList>
            <person name="Shiu S.H."/>
            <person name="Bleecker A.B."/>
        </authorList>
    </citation>
    <scope>GENE FAMILY</scope>
</reference>
<reference key="7">
    <citation type="journal article" date="2011" name="Proc. Natl. Acad. Sci. U.S.A.">
        <title>Heat induces the splicing by IRE1 of a mRNA encoding a transcription factor involved in the unfolded protein response in Arabidopsis.</title>
        <authorList>
            <person name="Deng Y."/>
            <person name="Humbert S."/>
            <person name="Liu J.X."/>
            <person name="Srivastava R."/>
            <person name="Rothstein S.J."/>
            <person name="Howell S.H."/>
        </authorList>
    </citation>
    <scope>DISRUPTION PHENOTYPE</scope>
</reference>
<reference key="8">
    <citation type="journal article" date="2011" name="Sci. Rep.">
        <title>Arabidopsis IRE1 catalyses unconventional splicing of bZIP60 mRNA to produce the active transcription factor.</title>
        <authorList>
            <person name="Nagashima Y."/>
            <person name="Mishiba K."/>
            <person name="Suzuki E."/>
            <person name="Shimada Y."/>
            <person name="Iwata Y."/>
            <person name="Koizumi N."/>
        </authorList>
    </citation>
    <scope>FUNCTION</scope>
    <scope>DISRUPTION PHENOTYPE</scope>
</reference>
<reference key="9">
    <citation type="journal article" date="2012" name="Plant J.">
        <title>AtIRE1A/AtIRE1B and AGB1 independently control two essential unfolded protein response pathways in Arabidopsis.</title>
        <authorList>
            <person name="Chen Y."/>
            <person name="Brandizzi F."/>
        </authorList>
    </citation>
    <scope>FUNCTION</scope>
    <scope>DISRUPTION PHENOTYPE</scope>
</reference>
<reference key="10">
    <citation type="journal article" date="2012" name="PLoS ONE">
        <title>IRE1/bZIP60-mediated unfolded protein response plays distinct roles in plant immunity and abiotic stress responses.</title>
        <authorList>
            <person name="Moreno A.A."/>
            <person name="Mukhtar M.S."/>
            <person name="Blanco F."/>
            <person name="Boatwright J.L."/>
            <person name="Moreno I."/>
            <person name="Jordan M.R."/>
            <person name="Chen Y."/>
            <person name="Brandizzi F."/>
            <person name="Dong X."/>
            <person name="Orellana A."/>
            <person name="Pajerowska-Mukhtar K.M."/>
        </authorList>
    </citation>
    <scope>FUNCTION</scope>
    <scope>DISRUPTION PHENOTYPE</scope>
</reference>
<reference key="11">
    <citation type="journal article" date="2012" name="Trends Plant Sci.">
        <title>Plant transducers of the endoplasmic reticulum unfolded protein response.</title>
        <authorList>
            <person name="Iwata Y."/>
            <person name="Koizumi N."/>
        </authorList>
    </citation>
    <scope>REVIEW</scope>
</reference>
<evidence type="ECO:0000250" key="1"/>
<evidence type="ECO:0000255" key="2"/>
<evidence type="ECO:0000255" key="3">
    <source>
        <dbReference type="PROSITE-ProRule" id="PRU00159"/>
    </source>
</evidence>
<evidence type="ECO:0000255" key="4">
    <source>
        <dbReference type="PROSITE-ProRule" id="PRU00725"/>
    </source>
</evidence>
<evidence type="ECO:0000255" key="5">
    <source>
        <dbReference type="PROSITE-ProRule" id="PRU10027"/>
    </source>
</evidence>
<evidence type="ECO:0000256" key="6">
    <source>
        <dbReference type="SAM" id="MobiDB-lite"/>
    </source>
</evidence>
<evidence type="ECO:0000269" key="7">
    <source>
    </source>
</evidence>
<evidence type="ECO:0000269" key="8">
    <source>
    </source>
</evidence>
<evidence type="ECO:0000269" key="9">
    <source>
    </source>
</evidence>
<evidence type="ECO:0000269" key="10">
    <source>
    </source>
</evidence>
<evidence type="ECO:0000269" key="11">
    <source>
    </source>
</evidence>
<evidence type="ECO:0000269" key="12">
    <source>
    </source>
</evidence>
<evidence type="ECO:0000305" key="13"/>
<gene>
    <name type="primary">IRE1A</name>
    <name type="synonym">IRE1-2</name>
    <name type="ordered locus">At2g17520</name>
    <name type="ORF">MJB20.8</name>
</gene>